<organism>
    <name type="scientific">Sminthopsis granulipes</name>
    <name type="common">White-tailed dunnart</name>
    <dbReference type="NCBI Taxonomy" id="90759"/>
    <lineage>
        <taxon>Eukaryota</taxon>
        <taxon>Metazoa</taxon>
        <taxon>Chordata</taxon>
        <taxon>Craniata</taxon>
        <taxon>Vertebrata</taxon>
        <taxon>Euteleostomi</taxon>
        <taxon>Mammalia</taxon>
        <taxon>Metatheria</taxon>
        <taxon>Dasyuromorphia</taxon>
        <taxon>Dasyuridae</taxon>
        <taxon>Sminthopsis</taxon>
    </lineage>
</organism>
<evidence type="ECO:0000250" key="1"/>
<evidence type="ECO:0000250" key="2">
    <source>
        <dbReference type="UniProtKB" id="P00157"/>
    </source>
</evidence>
<evidence type="ECO:0000255" key="3">
    <source>
        <dbReference type="PROSITE-ProRule" id="PRU00967"/>
    </source>
</evidence>
<evidence type="ECO:0000255" key="4">
    <source>
        <dbReference type="PROSITE-ProRule" id="PRU00968"/>
    </source>
</evidence>
<accession>Q9XP83</accession>
<name>CYB_SMIGA</name>
<protein>
    <recommendedName>
        <fullName>Cytochrome b</fullName>
    </recommendedName>
    <alternativeName>
        <fullName>Complex III subunit 3</fullName>
    </alternativeName>
    <alternativeName>
        <fullName>Complex III subunit III</fullName>
    </alternativeName>
    <alternativeName>
        <fullName>Cytochrome b-c1 complex subunit 3</fullName>
    </alternativeName>
    <alternativeName>
        <fullName>Ubiquinol-cytochrome-c reductase complex cytochrome b subunit</fullName>
    </alternativeName>
</protein>
<sequence length="381" mass="42867">MINLRKTHPLMKIINHSFIDLPAPSNISAWWNFGSLLGICLVIQILTGLFLAMHYTSDTMTAFSSVAHICRDVNYGWLIRNLHANGASMFFMCLFLHVGRGIYYGSYLYKETWNIGVILLLTVMATAFVGYVLPWGQMSFWGATVITNLLSAIPYIGTTLAEWIWGGFSVDKATLTRFFAFHFILPFIITALVIVHLLFLHETGSNNPSGINPDSDKIPFHPYYTIKDALGLMFLLLVLLSLALFSPDSLGDPDNFSPANPLNTPPHIKPEWYFLFAYAILRSIPNKLGGVLALLASILILLVIPFLHTANQRSMMFRPISQTLFWILTANLITLTWIGGQPVEQPFIIIGQLASILYFTLILILMPPAGMFENYMLEPKW</sequence>
<proteinExistence type="inferred from homology"/>
<keyword id="KW-0249">Electron transport</keyword>
<keyword id="KW-0349">Heme</keyword>
<keyword id="KW-0408">Iron</keyword>
<keyword id="KW-0472">Membrane</keyword>
<keyword id="KW-0479">Metal-binding</keyword>
<keyword id="KW-0496">Mitochondrion</keyword>
<keyword id="KW-0999">Mitochondrion inner membrane</keyword>
<keyword id="KW-0679">Respiratory chain</keyword>
<keyword id="KW-0812">Transmembrane</keyword>
<keyword id="KW-1133">Transmembrane helix</keyword>
<keyword id="KW-0813">Transport</keyword>
<keyword id="KW-0830">Ubiquinone</keyword>
<dbReference type="EMBL" id="AF088925">
    <property type="protein sequence ID" value="AAD38435.1"/>
    <property type="molecule type" value="Genomic_DNA"/>
</dbReference>
<dbReference type="SMR" id="Q9XP83"/>
<dbReference type="GO" id="GO:0005743">
    <property type="term" value="C:mitochondrial inner membrane"/>
    <property type="evidence" value="ECO:0007669"/>
    <property type="project" value="UniProtKB-SubCell"/>
</dbReference>
<dbReference type="GO" id="GO:0045275">
    <property type="term" value="C:respiratory chain complex III"/>
    <property type="evidence" value="ECO:0007669"/>
    <property type="project" value="InterPro"/>
</dbReference>
<dbReference type="GO" id="GO:0046872">
    <property type="term" value="F:metal ion binding"/>
    <property type="evidence" value="ECO:0007669"/>
    <property type="project" value="UniProtKB-KW"/>
</dbReference>
<dbReference type="GO" id="GO:0008121">
    <property type="term" value="F:ubiquinol-cytochrome-c reductase activity"/>
    <property type="evidence" value="ECO:0007669"/>
    <property type="project" value="InterPro"/>
</dbReference>
<dbReference type="GO" id="GO:0006122">
    <property type="term" value="P:mitochondrial electron transport, ubiquinol to cytochrome c"/>
    <property type="evidence" value="ECO:0007669"/>
    <property type="project" value="TreeGrafter"/>
</dbReference>
<dbReference type="CDD" id="cd00290">
    <property type="entry name" value="cytochrome_b_C"/>
    <property type="match status" value="1"/>
</dbReference>
<dbReference type="CDD" id="cd00284">
    <property type="entry name" value="Cytochrome_b_N"/>
    <property type="match status" value="1"/>
</dbReference>
<dbReference type="FunFam" id="1.20.810.10:FF:000002">
    <property type="entry name" value="Cytochrome b"/>
    <property type="match status" value="1"/>
</dbReference>
<dbReference type="Gene3D" id="1.20.810.10">
    <property type="entry name" value="Cytochrome Bc1 Complex, Chain C"/>
    <property type="match status" value="1"/>
</dbReference>
<dbReference type="InterPro" id="IPR005798">
    <property type="entry name" value="Cyt_b/b6_C"/>
</dbReference>
<dbReference type="InterPro" id="IPR036150">
    <property type="entry name" value="Cyt_b/b6_C_sf"/>
</dbReference>
<dbReference type="InterPro" id="IPR005797">
    <property type="entry name" value="Cyt_b/b6_N"/>
</dbReference>
<dbReference type="InterPro" id="IPR027387">
    <property type="entry name" value="Cytb/b6-like_sf"/>
</dbReference>
<dbReference type="InterPro" id="IPR030689">
    <property type="entry name" value="Cytochrome_b"/>
</dbReference>
<dbReference type="InterPro" id="IPR048260">
    <property type="entry name" value="Cytochrome_b_C_euk/bac"/>
</dbReference>
<dbReference type="InterPro" id="IPR048259">
    <property type="entry name" value="Cytochrome_b_N_euk/bac"/>
</dbReference>
<dbReference type="InterPro" id="IPR016174">
    <property type="entry name" value="Di-haem_cyt_TM"/>
</dbReference>
<dbReference type="PANTHER" id="PTHR19271">
    <property type="entry name" value="CYTOCHROME B"/>
    <property type="match status" value="1"/>
</dbReference>
<dbReference type="PANTHER" id="PTHR19271:SF16">
    <property type="entry name" value="CYTOCHROME B"/>
    <property type="match status" value="1"/>
</dbReference>
<dbReference type="Pfam" id="PF00032">
    <property type="entry name" value="Cytochrom_B_C"/>
    <property type="match status" value="1"/>
</dbReference>
<dbReference type="Pfam" id="PF00033">
    <property type="entry name" value="Cytochrome_B"/>
    <property type="match status" value="1"/>
</dbReference>
<dbReference type="PIRSF" id="PIRSF038885">
    <property type="entry name" value="COB"/>
    <property type="match status" value="1"/>
</dbReference>
<dbReference type="SUPFAM" id="SSF81648">
    <property type="entry name" value="a domain/subunit of cytochrome bc1 complex (Ubiquinol-cytochrome c reductase)"/>
    <property type="match status" value="1"/>
</dbReference>
<dbReference type="SUPFAM" id="SSF81342">
    <property type="entry name" value="Transmembrane di-heme cytochromes"/>
    <property type="match status" value="1"/>
</dbReference>
<dbReference type="PROSITE" id="PS51003">
    <property type="entry name" value="CYTB_CTER"/>
    <property type="match status" value="1"/>
</dbReference>
<dbReference type="PROSITE" id="PS51002">
    <property type="entry name" value="CYTB_NTER"/>
    <property type="match status" value="1"/>
</dbReference>
<reference key="1">
    <citation type="journal article" date="1999" name="Mol. Phylogenet. Evol.">
        <title>Systematic relationships within the dasyurid marsupial tribe Sminthopsini -- a multigene approach.</title>
        <authorList>
            <person name="Blacket M.J."/>
            <person name="Krajewski C."/>
            <person name="Labrinidis A."/>
            <person name="Cambron B."/>
            <person name="Cooper S."/>
            <person name="Westerman M."/>
        </authorList>
    </citation>
    <scope>NUCLEOTIDE SEQUENCE [GENOMIC DNA]</scope>
</reference>
<gene>
    <name type="primary">MT-CYB</name>
    <name type="synonym">COB</name>
    <name type="synonym">CYTB</name>
    <name type="synonym">MTCYB</name>
</gene>
<geneLocation type="mitochondrion"/>
<feature type="chain" id="PRO_0000061543" description="Cytochrome b">
    <location>
        <begin position="1"/>
        <end position="381"/>
    </location>
</feature>
<feature type="transmembrane region" description="Helical" evidence="2">
    <location>
        <begin position="33"/>
        <end position="53"/>
    </location>
</feature>
<feature type="transmembrane region" description="Helical" evidence="2">
    <location>
        <begin position="77"/>
        <end position="98"/>
    </location>
</feature>
<feature type="transmembrane region" description="Helical" evidence="2">
    <location>
        <begin position="113"/>
        <end position="133"/>
    </location>
</feature>
<feature type="transmembrane region" description="Helical" evidence="2">
    <location>
        <begin position="178"/>
        <end position="198"/>
    </location>
</feature>
<feature type="transmembrane region" description="Helical" evidence="2">
    <location>
        <begin position="226"/>
        <end position="246"/>
    </location>
</feature>
<feature type="transmembrane region" description="Helical" evidence="2">
    <location>
        <begin position="288"/>
        <end position="308"/>
    </location>
</feature>
<feature type="transmembrane region" description="Helical" evidence="2">
    <location>
        <begin position="320"/>
        <end position="340"/>
    </location>
</feature>
<feature type="transmembrane region" description="Helical" evidence="2">
    <location>
        <begin position="347"/>
        <end position="367"/>
    </location>
</feature>
<feature type="binding site" description="axial binding residue" evidence="2">
    <location>
        <position position="83"/>
    </location>
    <ligand>
        <name>heme b</name>
        <dbReference type="ChEBI" id="CHEBI:60344"/>
        <label>b562</label>
    </ligand>
    <ligandPart>
        <name>Fe</name>
        <dbReference type="ChEBI" id="CHEBI:18248"/>
    </ligandPart>
</feature>
<feature type="binding site" description="axial binding residue" evidence="2">
    <location>
        <position position="97"/>
    </location>
    <ligand>
        <name>heme b</name>
        <dbReference type="ChEBI" id="CHEBI:60344"/>
        <label>b566</label>
    </ligand>
    <ligandPart>
        <name>Fe</name>
        <dbReference type="ChEBI" id="CHEBI:18248"/>
    </ligandPart>
</feature>
<feature type="binding site" description="axial binding residue" evidence="2">
    <location>
        <position position="182"/>
    </location>
    <ligand>
        <name>heme b</name>
        <dbReference type="ChEBI" id="CHEBI:60344"/>
        <label>b562</label>
    </ligand>
    <ligandPart>
        <name>Fe</name>
        <dbReference type="ChEBI" id="CHEBI:18248"/>
    </ligandPart>
</feature>
<feature type="binding site" description="axial binding residue" evidence="2">
    <location>
        <position position="196"/>
    </location>
    <ligand>
        <name>heme b</name>
        <dbReference type="ChEBI" id="CHEBI:60344"/>
        <label>b566</label>
    </ligand>
    <ligandPart>
        <name>Fe</name>
        <dbReference type="ChEBI" id="CHEBI:18248"/>
    </ligandPart>
</feature>
<feature type="binding site" evidence="2">
    <location>
        <position position="201"/>
    </location>
    <ligand>
        <name>a ubiquinone</name>
        <dbReference type="ChEBI" id="CHEBI:16389"/>
    </ligand>
</feature>
<comment type="function">
    <text evidence="2">Component of the ubiquinol-cytochrome c reductase complex (complex III or cytochrome b-c1 complex) that is part of the mitochondrial respiratory chain. The b-c1 complex mediates electron transfer from ubiquinol to cytochrome c. Contributes to the generation of a proton gradient across the mitochondrial membrane that is then used for ATP synthesis.</text>
</comment>
<comment type="cofactor">
    <cofactor evidence="2">
        <name>heme b</name>
        <dbReference type="ChEBI" id="CHEBI:60344"/>
    </cofactor>
    <text evidence="2">Binds 2 heme b groups non-covalently.</text>
</comment>
<comment type="subunit">
    <text evidence="2">The cytochrome bc1 complex contains 11 subunits: 3 respiratory subunits (MT-CYB, CYC1 and UQCRFS1), 2 core proteins (UQCRC1 and UQCRC2) and 6 low-molecular weight proteins (UQCRH/QCR6, UQCRB/QCR7, UQCRQ/QCR8, UQCR10/QCR9, UQCR11/QCR10 and a cleavage product of UQCRFS1). This cytochrome bc1 complex then forms a dimer.</text>
</comment>
<comment type="subcellular location">
    <subcellularLocation>
        <location evidence="2">Mitochondrion inner membrane</location>
        <topology evidence="2">Multi-pass membrane protein</topology>
    </subcellularLocation>
</comment>
<comment type="miscellaneous">
    <text evidence="1">Heme 1 (or BL or b562) is low-potential and absorbs at about 562 nm, and heme 2 (or BH or b566) is high-potential and absorbs at about 566 nm.</text>
</comment>
<comment type="similarity">
    <text evidence="3 4">Belongs to the cytochrome b family.</text>
</comment>
<comment type="caution">
    <text evidence="2">The full-length protein contains only eight transmembrane helices, not nine as predicted by bioinformatics tools.</text>
</comment>